<name>S3TC2_MOUSE</name>
<accession>Q80VA5</accession>
<accession>Q8BWH2</accession>
<accession>Q8BXB8</accession>
<accession>Q8C0G6</accession>
<reference key="1">
    <citation type="journal article" date="2005" name="Science">
        <title>The transcriptional landscape of the mammalian genome.</title>
        <authorList>
            <person name="Carninci P."/>
            <person name="Kasukawa T."/>
            <person name="Katayama S."/>
            <person name="Gough J."/>
            <person name="Frith M.C."/>
            <person name="Maeda N."/>
            <person name="Oyama R."/>
            <person name="Ravasi T."/>
            <person name="Lenhard B."/>
            <person name="Wells C."/>
            <person name="Kodzius R."/>
            <person name="Shimokawa K."/>
            <person name="Bajic V.B."/>
            <person name="Brenner S.E."/>
            <person name="Batalov S."/>
            <person name="Forrest A.R."/>
            <person name="Zavolan M."/>
            <person name="Davis M.J."/>
            <person name="Wilming L.G."/>
            <person name="Aidinis V."/>
            <person name="Allen J.E."/>
            <person name="Ambesi-Impiombato A."/>
            <person name="Apweiler R."/>
            <person name="Aturaliya R.N."/>
            <person name="Bailey T.L."/>
            <person name="Bansal M."/>
            <person name="Baxter L."/>
            <person name="Beisel K.W."/>
            <person name="Bersano T."/>
            <person name="Bono H."/>
            <person name="Chalk A.M."/>
            <person name="Chiu K.P."/>
            <person name="Choudhary V."/>
            <person name="Christoffels A."/>
            <person name="Clutterbuck D.R."/>
            <person name="Crowe M.L."/>
            <person name="Dalla E."/>
            <person name="Dalrymple B.P."/>
            <person name="de Bono B."/>
            <person name="Della Gatta G."/>
            <person name="di Bernardo D."/>
            <person name="Down T."/>
            <person name="Engstrom P."/>
            <person name="Fagiolini M."/>
            <person name="Faulkner G."/>
            <person name="Fletcher C.F."/>
            <person name="Fukushima T."/>
            <person name="Furuno M."/>
            <person name="Futaki S."/>
            <person name="Gariboldi M."/>
            <person name="Georgii-Hemming P."/>
            <person name="Gingeras T.R."/>
            <person name="Gojobori T."/>
            <person name="Green R.E."/>
            <person name="Gustincich S."/>
            <person name="Harbers M."/>
            <person name="Hayashi Y."/>
            <person name="Hensch T.K."/>
            <person name="Hirokawa N."/>
            <person name="Hill D."/>
            <person name="Huminiecki L."/>
            <person name="Iacono M."/>
            <person name="Ikeo K."/>
            <person name="Iwama A."/>
            <person name="Ishikawa T."/>
            <person name="Jakt M."/>
            <person name="Kanapin A."/>
            <person name="Katoh M."/>
            <person name="Kawasawa Y."/>
            <person name="Kelso J."/>
            <person name="Kitamura H."/>
            <person name="Kitano H."/>
            <person name="Kollias G."/>
            <person name="Krishnan S.P."/>
            <person name="Kruger A."/>
            <person name="Kummerfeld S.K."/>
            <person name="Kurochkin I.V."/>
            <person name="Lareau L.F."/>
            <person name="Lazarevic D."/>
            <person name="Lipovich L."/>
            <person name="Liu J."/>
            <person name="Liuni S."/>
            <person name="McWilliam S."/>
            <person name="Madan Babu M."/>
            <person name="Madera M."/>
            <person name="Marchionni L."/>
            <person name="Matsuda H."/>
            <person name="Matsuzawa S."/>
            <person name="Miki H."/>
            <person name="Mignone F."/>
            <person name="Miyake S."/>
            <person name="Morris K."/>
            <person name="Mottagui-Tabar S."/>
            <person name="Mulder N."/>
            <person name="Nakano N."/>
            <person name="Nakauchi H."/>
            <person name="Ng P."/>
            <person name="Nilsson R."/>
            <person name="Nishiguchi S."/>
            <person name="Nishikawa S."/>
            <person name="Nori F."/>
            <person name="Ohara O."/>
            <person name="Okazaki Y."/>
            <person name="Orlando V."/>
            <person name="Pang K.C."/>
            <person name="Pavan W.J."/>
            <person name="Pavesi G."/>
            <person name="Pesole G."/>
            <person name="Petrovsky N."/>
            <person name="Piazza S."/>
            <person name="Reed J."/>
            <person name="Reid J.F."/>
            <person name="Ring B.Z."/>
            <person name="Ringwald M."/>
            <person name="Rost B."/>
            <person name="Ruan Y."/>
            <person name="Salzberg S.L."/>
            <person name="Sandelin A."/>
            <person name="Schneider C."/>
            <person name="Schoenbach C."/>
            <person name="Sekiguchi K."/>
            <person name="Semple C.A."/>
            <person name="Seno S."/>
            <person name="Sessa L."/>
            <person name="Sheng Y."/>
            <person name="Shibata Y."/>
            <person name="Shimada H."/>
            <person name="Shimada K."/>
            <person name="Silva D."/>
            <person name="Sinclair B."/>
            <person name="Sperling S."/>
            <person name="Stupka E."/>
            <person name="Sugiura K."/>
            <person name="Sultana R."/>
            <person name="Takenaka Y."/>
            <person name="Taki K."/>
            <person name="Tammoja K."/>
            <person name="Tan S.L."/>
            <person name="Tang S."/>
            <person name="Taylor M.S."/>
            <person name="Tegner J."/>
            <person name="Teichmann S.A."/>
            <person name="Ueda H.R."/>
            <person name="van Nimwegen E."/>
            <person name="Verardo R."/>
            <person name="Wei C.L."/>
            <person name="Yagi K."/>
            <person name="Yamanishi H."/>
            <person name="Zabarovsky E."/>
            <person name="Zhu S."/>
            <person name="Zimmer A."/>
            <person name="Hide W."/>
            <person name="Bult C."/>
            <person name="Grimmond S.M."/>
            <person name="Teasdale R.D."/>
            <person name="Liu E.T."/>
            <person name="Brusic V."/>
            <person name="Quackenbush J."/>
            <person name="Wahlestedt C."/>
            <person name="Mattick J.S."/>
            <person name="Hume D.A."/>
            <person name="Kai C."/>
            <person name="Sasaki D."/>
            <person name="Tomaru Y."/>
            <person name="Fukuda S."/>
            <person name="Kanamori-Katayama M."/>
            <person name="Suzuki M."/>
            <person name="Aoki J."/>
            <person name="Arakawa T."/>
            <person name="Iida J."/>
            <person name="Imamura K."/>
            <person name="Itoh M."/>
            <person name="Kato T."/>
            <person name="Kawaji H."/>
            <person name="Kawagashira N."/>
            <person name="Kawashima T."/>
            <person name="Kojima M."/>
            <person name="Kondo S."/>
            <person name="Konno H."/>
            <person name="Nakano K."/>
            <person name="Ninomiya N."/>
            <person name="Nishio T."/>
            <person name="Okada M."/>
            <person name="Plessy C."/>
            <person name="Shibata K."/>
            <person name="Shiraki T."/>
            <person name="Suzuki S."/>
            <person name="Tagami M."/>
            <person name="Waki K."/>
            <person name="Watahiki A."/>
            <person name="Okamura-Oho Y."/>
            <person name="Suzuki H."/>
            <person name="Kawai J."/>
            <person name="Hayashizaki Y."/>
        </authorList>
    </citation>
    <scope>NUCLEOTIDE SEQUENCE [LARGE SCALE MRNA] (ISOFORMS 2; 3 AND 4)</scope>
    <source>
        <strain>C57BL/6J</strain>
        <tissue>Head</tissue>
        <tissue>Lung</tissue>
        <tissue>Testis</tissue>
    </source>
</reference>
<reference key="2">
    <citation type="journal article" date="2004" name="Genome Res.">
        <title>The status, quality, and expansion of the NIH full-length cDNA project: the Mammalian Gene Collection (MGC).</title>
        <authorList>
            <consortium name="The MGC Project Team"/>
        </authorList>
    </citation>
    <scope>NUCLEOTIDE SEQUENCE [LARGE SCALE MRNA] OF 959-1289 (ISOFORM 1)</scope>
    <source>
        <strain>C57BL/6J</strain>
        <strain>FVB/N</strain>
        <tissue>Kidney</tissue>
        <tissue>Mammary tumor</tissue>
        <tissue>Pituitary</tissue>
    </source>
</reference>
<reference key="3">
    <citation type="journal article" date="2010" name="Cell">
        <title>A tissue-specific atlas of mouse protein phosphorylation and expression.</title>
        <authorList>
            <person name="Huttlin E.L."/>
            <person name="Jedrychowski M.P."/>
            <person name="Elias J.E."/>
            <person name="Goswami T."/>
            <person name="Rad R."/>
            <person name="Beausoleil S.A."/>
            <person name="Villen J."/>
            <person name="Haas W."/>
            <person name="Sowa M.E."/>
            <person name="Gygi S.P."/>
        </authorList>
    </citation>
    <scope>IDENTIFICATION BY MASS SPECTROMETRY [LARGE SCALE ANALYSIS]</scope>
    <source>
        <tissue>Kidney</tissue>
    </source>
</reference>
<keyword id="KW-0025">Alternative splicing</keyword>
<keyword id="KW-1185">Reference proteome</keyword>
<keyword id="KW-0677">Repeat</keyword>
<keyword id="KW-0728">SH3 domain</keyword>
<keyword id="KW-0802">TPR repeat</keyword>
<feature type="chain" id="PRO_0000106357" description="SH3 domain and tetratricopeptide repeat-containing protein 2">
    <location>
        <begin position="1"/>
        <end position="1289"/>
    </location>
</feature>
<feature type="domain" description="SH3 1" evidence="1">
    <location>
        <begin position="176"/>
        <end position="239"/>
    </location>
</feature>
<feature type="domain" description="SH3 2" evidence="1">
    <location>
        <begin position="267"/>
        <end position="330"/>
    </location>
</feature>
<feature type="repeat" description="TPR 1">
    <location>
        <begin position="529"/>
        <end position="562"/>
    </location>
</feature>
<feature type="repeat" description="TPR 2">
    <location>
        <begin position="758"/>
        <end position="791"/>
    </location>
</feature>
<feature type="repeat" description="TPR 3">
    <location>
        <begin position="837"/>
        <end position="870"/>
    </location>
</feature>
<feature type="repeat" description="TPR 4">
    <location>
        <begin position="1002"/>
        <end position="1038"/>
    </location>
</feature>
<feature type="repeat" description="TPR 5">
    <location>
        <begin position="1085"/>
        <end position="1119"/>
    </location>
</feature>
<feature type="repeat" description="TPR 6">
    <location>
        <begin position="1120"/>
        <end position="1153"/>
    </location>
</feature>
<feature type="repeat" description="TPR 7">
    <location>
        <begin position="1167"/>
        <end position="1200"/>
    </location>
</feature>
<feature type="repeat" description="TPR 8">
    <location>
        <begin position="1211"/>
        <end position="1245"/>
    </location>
</feature>
<feature type="region of interest" description="Disordered" evidence="2">
    <location>
        <begin position="393"/>
        <end position="442"/>
    </location>
</feature>
<feature type="compositionally biased region" description="Low complexity" evidence="2">
    <location>
        <begin position="414"/>
        <end position="424"/>
    </location>
</feature>
<feature type="splice variant" id="VSP_009887" description="In isoform 2." evidence="3">
    <location>
        <begin position="1"/>
        <end position="407"/>
    </location>
</feature>
<feature type="splice variant" id="VSP_009888" description="In isoform 3." evidence="3">
    <original>YVSICLEHLFFDHTYWLNSRLVDDTEI</original>
    <variation>MPWVGGGEHLSPSSRLVEPDTGELVCL</variation>
    <location>
        <begin position="130"/>
        <end position="156"/>
    </location>
</feature>
<feature type="splice variant" id="VSP_009889" description="In isoform 3." evidence="3">
    <location>
        <begin position="157"/>
        <end position="1289"/>
    </location>
</feature>
<feature type="splice variant" id="VSP_009890" description="In isoform 4." evidence="3">
    <original>SQLQVTKSLCHFYSSVSPNPDACITYHEHWLALAQQLRDREME</original>
    <variation>TRCPRTPMRALPIMNTGWPWLSNSGIGRWRDSYWSPLGSFIGT</variation>
    <location>
        <begin position="959"/>
        <end position="1001"/>
    </location>
</feature>
<feature type="splice variant" id="VSP_009891" description="In isoform 4." evidence="3">
    <location>
        <begin position="1002"/>
        <end position="1289"/>
    </location>
</feature>
<feature type="splice variant" id="VSP_009892" description="In isoform 2." evidence="3">
    <location>
        <begin position="1020"/>
        <end position="1289"/>
    </location>
</feature>
<proteinExistence type="evidence at protein level"/>
<dbReference type="EMBL" id="AK031388">
    <property type="protein sequence ID" value="BAC27379.1"/>
    <property type="molecule type" value="mRNA"/>
</dbReference>
<dbReference type="EMBL" id="AK048066">
    <property type="protein sequence ID" value="BAC33233.1"/>
    <property type="molecule type" value="mRNA"/>
</dbReference>
<dbReference type="EMBL" id="AK052534">
    <property type="protein sequence ID" value="BAC35030.1"/>
    <property type="molecule type" value="mRNA"/>
</dbReference>
<dbReference type="EMBL" id="BC037000">
    <property type="status" value="NOT_ANNOTATED_CDS"/>
    <property type="molecule type" value="mRNA"/>
</dbReference>
<dbReference type="EMBL" id="BC049856">
    <property type="protein sequence ID" value="AAH49856.1"/>
    <property type="molecule type" value="mRNA"/>
</dbReference>
<dbReference type="CCDS" id="CCDS37840.1">
    <molecule id="Q80VA5-1"/>
</dbReference>
<dbReference type="RefSeq" id="NP_766216.2">
    <molecule id="Q80VA5-1"/>
    <property type="nucleotide sequence ID" value="NM_172628.3"/>
</dbReference>
<dbReference type="FunCoup" id="Q80VA5">
    <property type="interactions" value="533"/>
</dbReference>
<dbReference type="STRING" id="10090.ENSMUSP00000055094"/>
<dbReference type="iPTMnet" id="Q80VA5"/>
<dbReference type="PhosphoSitePlus" id="Q80VA5"/>
<dbReference type="SwissPalm" id="Q80VA5"/>
<dbReference type="PaxDb" id="10090-ENSMUSP00000055094"/>
<dbReference type="ProteomicsDB" id="253382">
    <molecule id="Q80VA5-1"/>
</dbReference>
<dbReference type="ProteomicsDB" id="253383">
    <molecule id="Q80VA5-2"/>
</dbReference>
<dbReference type="ProteomicsDB" id="253384">
    <molecule id="Q80VA5-3"/>
</dbReference>
<dbReference type="ProteomicsDB" id="253385">
    <molecule id="Q80VA5-4"/>
</dbReference>
<dbReference type="Antibodypedia" id="49222">
    <property type="antibodies" value="78 antibodies from 17 providers"/>
</dbReference>
<dbReference type="DNASU" id="225608"/>
<dbReference type="Ensembl" id="ENSMUST00000051720.6">
    <molecule id="Q80VA5-1"/>
    <property type="protein sequence ID" value="ENSMUSP00000055094.6"/>
    <property type="gene ID" value="ENSMUSG00000045629.9"/>
</dbReference>
<dbReference type="Ensembl" id="ENSMUST00000235652.2">
    <molecule id="Q80VA5-4"/>
    <property type="protein sequence ID" value="ENSMUSP00000158542.2"/>
    <property type="gene ID" value="ENSMUSG00000045629.9"/>
</dbReference>
<dbReference type="GeneID" id="225608"/>
<dbReference type="KEGG" id="mmu:225608"/>
<dbReference type="UCSC" id="uc008fcu.1">
    <molecule id="Q80VA5-3"/>
    <property type="organism name" value="mouse"/>
</dbReference>
<dbReference type="UCSC" id="uc008fcv.1">
    <molecule id="Q80VA5-1"/>
    <property type="organism name" value="mouse"/>
</dbReference>
<dbReference type="UCSC" id="uc008fcw.1">
    <molecule id="Q80VA5-2"/>
    <property type="organism name" value="mouse"/>
</dbReference>
<dbReference type="AGR" id="MGI:2444417"/>
<dbReference type="CTD" id="79628"/>
<dbReference type="MGI" id="MGI:2444417">
    <property type="gene designation" value="Sh3tc2"/>
</dbReference>
<dbReference type="VEuPathDB" id="HostDB:ENSMUSG00000045629"/>
<dbReference type="eggNOG" id="ENOG502R9YA">
    <property type="taxonomic scope" value="Eukaryota"/>
</dbReference>
<dbReference type="GeneTree" id="ENSGT00530000063812"/>
<dbReference type="HOGENOM" id="CLU_004832_0_0_1"/>
<dbReference type="InParanoid" id="Q80VA5"/>
<dbReference type="OMA" id="HLETMYL"/>
<dbReference type="PhylomeDB" id="Q80VA5"/>
<dbReference type="TreeFam" id="TF333167"/>
<dbReference type="BioGRID-ORCS" id="225608">
    <property type="hits" value="2 hits in 81 CRISPR screens"/>
</dbReference>
<dbReference type="ChiTaRS" id="Sh3tc2">
    <property type="organism name" value="mouse"/>
</dbReference>
<dbReference type="PRO" id="PR:Q80VA5"/>
<dbReference type="Proteomes" id="UP000000589">
    <property type="component" value="Chromosome 18"/>
</dbReference>
<dbReference type="RNAct" id="Q80VA5">
    <property type="molecule type" value="protein"/>
</dbReference>
<dbReference type="Bgee" id="ENSMUSG00000045629">
    <property type="expression patterns" value="Expressed in placenta labyrinth and 95 other cell types or tissues"/>
</dbReference>
<dbReference type="ExpressionAtlas" id="Q80VA5">
    <property type="expression patterns" value="baseline and differential"/>
</dbReference>
<dbReference type="GO" id="GO:0031410">
    <property type="term" value="C:cytoplasmic vesicle"/>
    <property type="evidence" value="ECO:0000314"/>
    <property type="project" value="MGI"/>
</dbReference>
<dbReference type="GO" id="GO:0005886">
    <property type="term" value="C:plasma membrane"/>
    <property type="evidence" value="ECO:0000314"/>
    <property type="project" value="MGI"/>
</dbReference>
<dbReference type="GO" id="GO:0055037">
    <property type="term" value="C:recycling endosome"/>
    <property type="evidence" value="ECO:0000314"/>
    <property type="project" value="MGI"/>
</dbReference>
<dbReference type="GO" id="GO:0022011">
    <property type="term" value="P:myelination in peripheral nervous system"/>
    <property type="evidence" value="ECO:0000315"/>
    <property type="project" value="MGI"/>
</dbReference>
<dbReference type="GO" id="GO:0032287">
    <property type="term" value="P:peripheral nervous system myelin maintenance"/>
    <property type="evidence" value="ECO:0000315"/>
    <property type="project" value="MGI"/>
</dbReference>
<dbReference type="GO" id="GO:1901184">
    <property type="term" value="P:regulation of ERBB signaling pathway"/>
    <property type="evidence" value="ECO:0000315"/>
    <property type="project" value="MGI"/>
</dbReference>
<dbReference type="GO" id="GO:0033157">
    <property type="term" value="P:regulation of intracellular protein transport"/>
    <property type="evidence" value="ECO:0000315"/>
    <property type="project" value="MGI"/>
</dbReference>
<dbReference type="CDD" id="cd11885">
    <property type="entry name" value="SH3_SH3TC"/>
    <property type="match status" value="1"/>
</dbReference>
<dbReference type="FunFam" id="2.30.30.40:FF:000446">
    <property type="entry name" value="SH3 domain and tetratricopeptide repeat-containing protein 2"/>
    <property type="match status" value="1"/>
</dbReference>
<dbReference type="Gene3D" id="2.30.30.40">
    <property type="entry name" value="SH3 Domains"/>
    <property type="match status" value="1"/>
</dbReference>
<dbReference type="Gene3D" id="1.25.40.10">
    <property type="entry name" value="Tetratricopeptide repeat domain"/>
    <property type="match status" value="2"/>
</dbReference>
<dbReference type="InterPro" id="IPR036028">
    <property type="entry name" value="SH3-like_dom_sf"/>
</dbReference>
<dbReference type="InterPro" id="IPR001452">
    <property type="entry name" value="SH3_domain"/>
</dbReference>
<dbReference type="InterPro" id="IPR042772">
    <property type="entry name" value="SH3TC1/SH3TC2"/>
</dbReference>
<dbReference type="InterPro" id="IPR011990">
    <property type="entry name" value="TPR-like_helical_dom_sf"/>
</dbReference>
<dbReference type="InterPro" id="IPR019734">
    <property type="entry name" value="TPR_rpt"/>
</dbReference>
<dbReference type="PANTHER" id="PTHR22647:SF2">
    <property type="entry name" value="SH3 DOMAIN AND TETRATRICOPEPTIDE REPEAT-CONTAINING PROTEIN 2"/>
    <property type="match status" value="1"/>
</dbReference>
<dbReference type="PANTHER" id="PTHR22647">
    <property type="entry name" value="SH3 DOMAIN AND TETRATRICOPEPTIDE REPEATS CONTAINING PROTEIN"/>
    <property type="match status" value="1"/>
</dbReference>
<dbReference type="Pfam" id="PF00018">
    <property type="entry name" value="SH3_1"/>
    <property type="match status" value="1"/>
</dbReference>
<dbReference type="Pfam" id="PF07653">
    <property type="entry name" value="SH3_2"/>
    <property type="match status" value="1"/>
</dbReference>
<dbReference type="Pfam" id="PF13181">
    <property type="entry name" value="TPR_8"/>
    <property type="match status" value="1"/>
</dbReference>
<dbReference type="SMART" id="SM00326">
    <property type="entry name" value="SH3"/>
    <property type="match status" value="2"/>
</dbReference>
<dbReference type="SMART" id="SM00028">
    <property type="entry name" value="TPR"/>
    <property type="match status" value="6"/>
</dbReference>
<dbReference type="SUPFAM" id="SSF50044">
    <property type="entry name" value="SH3-domain"/>
    <property type="match status" value="2"/>
</dbReference>
<dbReference type="SUPFAM" id="SSF48452">
    <property type="entry name" value="TPR-like"/>
    <property type="match status" value="4"/>
</dbReference>
<dbReference type="PROSITE" id="PS50002">
    <property type="entry name" value="SH3"/>
    <property type="match status" value="2"/>
</dbReference>
<gene>
    <name type="primary">Sh3tc2</name>
    <name type="synonym">Kiaa1985</name>
</gene>
<organism>
    <name type="scientific">Mus musculus</name>
    <name type="common">Mouse</name>
    <dbReference type="NCBI Taxonomy" id="10090"/>
    <lineage>
        <taxon>Eukaryota</taxon>
        <taxon>Metazoa</taxon>
        <taxon>Chordata</taxon>
        <taxon>Craniata</taxon>
        <taxon>Vertebrata</taxon>
        <taxon>Euteleostomi</taxon>
        <taxon>Mammalia</taxon>
        <taxon>Eutheria</taxon>
        <taxon>Euarchontoglires</taxon>
        <taxon>Glires</taxon>
        <taxon>Rodentia</taxon>
        <taxon>Myomorpha</taxon>
        <taxon>Muroidea</taxon>
        <taxon>Muridae</taxon>
        <taxon>Murinae</taxon>
        <taxon>Mus</taxon>
        <taxon>Mus</taxon>
    </lineage>
</organism>
<comment type="alternative products">
    <event type="alternative splicing"/>
    <isoform>
        <id>Q80VA5-1</id>
        <name>1</name>
        <sequence type="displayed"/>
    </isoform>
    <isoform>
        <id>Q80VA5-2</id>
        <name>2</name>
        <sequence type="described" ref="VSP_009887 VSP_009892"/>
    </isoform>
    <isoform>
        <id>Q80VA5-3</id>
        <name>3</name>
        <sequence type="described" ref="VSP_009888 VSP_009889"/>
    </isoform>
    <isoform>
        <id>Q80VA5-4</id>
        <name>4</name>
        <sequence type="described" ref="VSP_009890 VSP_009891"/>
    </isoform>
</comment>
<protein>
    <recommendedName>
        <fullName>SH3 domain and tetratricopeptide repeat-containing protein 2</fullName>
    </recommendedName>
</protein>
<sequence length="1289" mass="145144">MGGCFCIPGERSLPWGPGKEGSSKDPPGLAEDTSSLENKRKCFLPQNMTQDLVLSFCVKSRSRRCVNAALQEAARRRLWALENEAQEVHALFKDLSARLVSVQSQKDQFLITFKTLEEIWKFSTYLNLGYVSICLEHLFFDHTYWLNSRLVDDTEIQVSVDDNHLENIYLGLLLQEGHFFCRAVCSVAQPADKEGEYLTLCKNELISVLSGGESECEAMSLVTGQRGLVPMSALEPLPVPFHQWFLKNHPGICGLPRKRDWTGSGQIGRGRCKALMDYEQEERDELCFLQGESIDVIGFVIPGLQWFIGKSVSSGEVGFVPTRSIDLDSCSPMSKNSAFFSDEERSSLWSPGSERKAECSGFLCSLAHTDITSIYRLSEFEAIQNLQNDLSASQPEGFREARSGGTWMERQTIGSRRSSGSGDSSPEEDELISASSDSYHLPEPEDLDDPELFMDLSTSLEEDDVEHFAPILAFLDHEGYTDHFKSLYDFSFSFLTSSFYSFSEEDELVAYLETSRKWAKMSHMTWAHARLCFLLGRLSIRKTKLSQARVYFEEAIRVLDGAFEDLSLVAALYINLAAIYLRQRLRHKGPTLLEKAGALLACLPDHEFSTKNELDVVTYVLRQGIVVGSGLLEARSCFLAIRLLLSLGRHEEVVPFAERLQLLSGHPPASEATATMLSSLYDKKYLPHLAVASVQKRGPQSARGMSLSIWQAYLVLQNATKILGVPSSNWCEVSALACPTLRQALAACEELSDQDIQRTLCLILSKMYLQHQSPDGSVHYLSQAHVLGKLLGEEEAFESSLCLAWAYLLGRQTEKALEILEPLLCSLRETECVTQRGVVHNLLGLAFEDEGRTSRAAKSYLRALIRAREMGNIRNQAVSMANLGHLTLKSCMQQSARGYLLQAVRLYSELQASKETDMELVQVLLWLGQASVSGHQLVHSRLCYEMALLFGLRHQHLSSQLQVTKSLCHFYSSVSPNPDACITYHEHWLALAQQLRDREMEGQLLESLGQLYRNLNTSRSLRRSLACIKESLRIFVDLGERDKAAEAWLGAGRLHYLMQEDELVELYLQEAIQTALRSEEPSLALKLYEEAGDVFFNGTRHRHRAVEYYRAGAVPLARRMKALRTELRIFNKLTELQISLEGYEKALEFATLAARLSVLTGDQKQELVAFHRLATVYFSLNMYEMAEDCYLKTLSLCPPWLQSPKEALYYAKVYCRLGRLTFYQLKDAHDATEYFLLALAAAVLMGDEELQNTIKNRLDSICQSPLWHSNPFGCSSERARWLSGGSLAL</sequence>
<evidence type="ECO:0000255" key="1">
    <source>
        <dbReference type="PROSITE-ProRule" id="PRU00192"/>
    </source>
</evidence>
<evidence type="ECO:0000256" key="2">
    <source>
        <dbReference type="SAM" id="MobiDB-lite"/>
    </source>
</evidence>
<evidence type="ECO:0000303" key="3">
    <source>
    </source>
</evidence>